<proteinExistence type="inferred from homology"/>
<gene>
    <name evidence="1" type="primary">phnX</name>
    <name type="ordered locus">lp_0711</name>
</gene>
<organism>
    <name type="scientific">Lactiplantibacillus plantarum (strain ATCC BAA-793 / NCIMB 8826 / WCFS1)</name>
    <name type="common">Lactobacillus plantarum</name>
    <dbReference type="NCBI Taxonomy" id="220668"/>
    <lineage>
        <taxon>Bacteria</taxon>
        <taxon>Bacillati</taxon>
        <taxon>Bacillota</taxon>
        <taxon>Bacilli</taxon>
        <taxon>Lactobacillales</taxon>
        <taxon>Lactobacillaceae</taxon>
        <taxon>Lactiplantibacillus</taxon>
    </lineage>
</organism>
<feature type="chain" id="PRO_0000284589" description="Phosphonoacetaldehyde hydrolase">
    <location>
        <begin position="1"/>
        <end position="265"/>
    </location>
</feature>
<feature type="active site" description="Nucleophile" evidence="1">
    <location>
        <position position="9"/>
    </location>
</feature>
<feature type="active site" description="Schiff-base intermediate with substrate" evidence="1">
    <location>
        <position position="50"/>
    </location>
</feature>
<feature type="binding site" evidence="1">
    <location>
        <position position="9"/>
    </location>
    <ligand>
        <name>Mg(2+)</name>
        <dbReference type="ChEBI" id="CHEBI:18420"/>
    </ligand>
</feature>
<feature type="binding site" evidence="1">
    <location>
        <position position="11"/>
    </location>
    <ligand>
        <name>Mg(2+)</name>
        <dbReference type="ChEBI" id="CHEBI:18420"/>
    </ligand>
</feature>
<feature type="binding site" evidence="1">
    <location>
        <position position="184"/>
    </location>
    <ligand>
        <name>Mg(2+)</name>
        <dbReference type="ChEBI" id="CHEBI:18420"/>
    </ligand>
</feature>
<sequence>MTIKAVIFDWAGTTIDYGSRAPIVAFQKAFANVGIQISEAEIRQDMGLDKYTHIHKIMDLPAIQNDWQARFQVLPTEDDCNQIFSNFKAILLSSLTEFGQLKPGMSAVIDYLTAHNISYGTTTGYDAEMLALVLPIAAKQGYRPAVNITSEQTGGVGRPAPAMLALAAEQLTVTDPTTVMKIGDSVNDILEGNNADAVSVGIIDGSNIMGLSELAFNALSPAEQAERRAHVTAAYQRAGADYILQSMAELPALLDQINQPVATDH</sequence>
<dbReference type="EC" id="3.11.1.1" evidence="1"/>
<dbReference type="EMBL" id="AL935263">
    <property type="protein sequence ID" value="CCC78185.1"/>
    <property type="molecule type" value="Genomic_DNA"/>
</dbReference>
<dbReference type="RefSeq" id="WP_011101141.1">
    <property type="nucleotide sequence ID" value="NC_004567.2"/>
</dbReference>
<dbReference type="RefSeq" id="YP_004888699.1">
    <property type="nucleotide sequence ID" value="NC_004567.2"/>
</dbReference>
<dbReference type="SMR" id="Q88YN8"/>
<dbReference type="STRING" id="220668.lp_0711"/>
<dbReference type="EnsemblBacteria" id="CCC78185">
    <property type="protein sequence ID" value="CCC78185"/>
    <property type="gene ID" value="lp_0711"/>
</dbReference>
<dbReference type="KEGG" id="lpl:lp_0711"/>
<dbReference type="PATRIC" id="fig|220668.9.peg.598"/>
<dbReference type="eggNOG" id="COG0637">
    <property type="taxonomic scope" value="Bacteria"/>
</dbReference>
<dbReference type="HOGENOM" id="CLU_045011_12_0_9"/>
<dbReference type="OrthoDB" id="5504491at2"/>
<dbReference type="PhylomeDB" id="Q88YN8"/>
<dbReference type="Proteomes" id="UP000000432">
    <property type="component" value="Chromosome"/>
</dbReference>
<dbReference type="GO" id="GO:0005829">
    <property type="term" value="C:cytosol"/>
    <property type="evidence" value="ECO:0007669"/>
    <property type="project" value="TreeGrafter"/>
</dbReference>
<dbReference type="GO" id="GO:0000287">
    <property type="term" value="F:magnesium ion binding"/>
    <property type="evidence" value="ECO:0007669"/>
    <property type="project" value="UniProtKB-UniRule"/>
</dbReference>
<dbReference type="GO" id="GO:0008967">
    <property type="term" value="F:phosphoglycolate phosphatase activity"/>
    <property type="evidence" value="ECO:0007669"/>
    <property type="project" value="TreeGrafter"/>
</dbReference>
<dbReference type="GO" id="GO:0050194">
    <property type="term" value="F:phosphonoacetaldehyde hydrolase activity"/>
    <property type="evidence" value="ECO:0007669"/>
    <property type="project" value="UniProtKB-UniRule"/>
</dbReference>
<dbReference type="GO" id="GO:0006281">
    <property type="term" value="P:DNA repair"/>
    <property type="evidence" value="ECO:0007669"/>
    <property type="project" value="TreeGrafter"/>
</dbReference>
<dbReference type="GO" id="GO:0019700">
    <property type="term" value="P:organic phosphonate catabolic process"/>
    <property type="evidence" value="ECO:0007669"/>
    <property type="project" value="InterPro"/>
</dbReference>
<dbReference type="Gene3D" id="3.40.50.1000">
    <property type="entry name" value="HAD superfamily/HAD-like"/>
    <property type="match status" value="1"/>
</dbReference>
<dbReference type="Gene3D" id="1.10.150.240">
    <property type="entry name" value="Putative phosphatase, domain 2"/>
    <property type="match status" value="1"/>
</dbReference>
<dbReference type="HAMAP" id="MF_01375">
    <property type="entry name" value="PhnX"/>
    <property type="match status" value="1"/>
</dbReference>
<dbReference type="InterPro" id="IPR050155">
    <property type="entry name" value="HAD-like_hydrolase_sf"/>
</dbReference>
<dbReference type="InterPro" id="IPR036412">
    <property type="entry name" value="HAD-like_sf"/>
</dbReference>
<dbReference type="InterPro" id="IPR023214">
    <property type="entry name" value="HAD_sf"/>
</dbReference>
<dbReference type="InterPro" id="IPR023198">
    <property type="entry name" value="PGP-like_dom2"/>
</dbReference>
<dbReference type="InterPro" id="IPR006323">
    <property type="entry name" value="Phosphonoacetald_hydro"/>
</dbReference>
<dbReference type="NCBIfam" id="TIGR01422">
    <property type="entry name" value="phosphonatase"/>
    <property type="match status" value="1"/>
</dbReference>
<dbReference type="PANTHER" id="PTHR43434">
    <property type="entry name" value="PHOSPHOGLYCOLATE PHOSPHATASE"/>
    <property type="match status" value="1"/>
</dbReference>
<dbReference type="PANTHER" id="PTHR43434:SF19">
    <property type="entry name" value="PHOSPHONOACETALDEHYDE HYDROLASE"/>
    <property type="match status" value="1"/>
</dbReference>
<dbReference type="Pfam" id="PF00702">
    <property type="entry name" value="Hydrolase"/>
    <property type="match status" value="1"/>
</dbReference>
<dbReference type="SFLD" id="SFLDG01129">
    <property type="entry name" value="C1.5:_HAD__Beta-PGM__Phosphata"/>
    <property type="match status" value="1"/>
</dbReference>
<dbReference type="SFLD" id="SFLDS00003">
    <property type="entry name" value="Haloacid_Dehalogenase"/>
    <property type="match status" value="1"/>
</dbReference>
<dbReference type="SUPFAM" id="SSF56784">
    <property type="entry name" value="HAD-like"/>
    <property type="match status" value="1"/>
</dbReference>
<keyword id="KW-0378">Hydrolase</keyword>
<keyword id="KW-0460">Magnesium</keyword>
<keyword id="KW-0479">Metal-binding</keyword>
<keyword id="KW-1185">Reference proteome</keyword>
<keyword id="KW-0704">Schiff base</keyword>
<comment type="function">
    <text evidence="1">Involved in phosphonate degradation.</text>
</comment>
<comment type="catalytic activity">
    <reaction evidence="1">
        <text>phosphonoacetaldehyde + H2O = acetaldehyde + phosphate + H(+)</text>
        <dbReference type="Rhea" id="RHEA:18905"/>
        <dbReference type="ChEBI" id="CHEBI:15343"/>
        <dbReference type="ChEBI" id="CHEBI:15377"/>
        <dbReference type="ChEBI" id="CHEBI:15378"/>
        <dbReference type="ChEBI" id="CHEBI:43474"/>
        <dbReference type="ChEBI" id="CHEBI:58383"/>
        <dbReference type="EC" id="3.11.1.1"/>
    </reaction>
</comment>
<comment type="cofactor">
    <cofactor evidence="1">
        <name>Mg(2+)</name>
        <dbReference type="ChEBI" id="CHEBI:18420"/>
    </cofactor>
    <text evidence="1">Binds 1 Mg(2+) ion per subunit.</text>
</comment>
<comment type="subunit">
    <text evidence="1">Homodimer.</text>
</comment>
<comment type="similarity">
    <text evidence="1">Belongs to the HAD-like hydrolase superfamily. PhnX family.</text>
</comment>
<evidence type="ECO:0000255" key="1">
    <source>
        <dbReference type="HAMAP-Rule" id="MF_01375"/>
    </source>
</evidence>
<reference key="1">
    <citation type="journal article" date="2003" name="Proc. Natl. Acad. Sci. U.S.A.">
        <title>Complete genome sequence of Lactobacillus plantarum WCFS1.</title>
        <authorList>
            <person name="Kleerebezem M."/>
            <person name="Boekhorst J."/>
            <person name="van Kranenburg R."/>
            <person name="Molenaar D."/>
            <person name="Kuipers O.P."/>
            <person name="Leer R."/>
            <person name="Tarchini R."/>
            <person name="Peters S.A."/>
            <person name="Sandbrink H.M."/>
            <person name="Fiers M.W.E.J."/>
            <person name="Stiekema W."/>
            <person name="Klein Lankhorst R.M."/>
            <person name="Bron P.A."/>
            <person name="Hoffer S.M."/>
            <person name="Nierop Groot M.N."/>
            <person name="Kerkhoven R."/>
            <person name="De Vries M."/>
            <person name="Ursing B."/>
            <person name="De Vos W.M."/>
            <person name="Siezen R.J."/>
        </authorList>
    </citation>
    <scope>NUCLEOTIDE SEQUENCE [LARGE SCALE GENOMIC DNA]</scope>
    <source>
        <strain>ATCC BAA-793 / NCIMB 8826 / WCFS1</strain>
    </source>
</reference>
<reference key="2">
    <citation type="journal article" date="2012" name="J. Bacteriol.">
        <title>Complete resequencing and reannotation of the Lactobacillus plantarum WCFS1 genome.</title>
        <authorList>
            <person name="Siezen R.J."/>
            <person name="Francke C."/>
            <person name="Renckens B."/>
            <person name="Boekhorst J."/>
            <person name="Wels M."/>
            <person name="Kleerebezem M."/>
            <person name="van Hijum S.A."/>
        </authorList>
    </citation>
    <scope>NUCLEOTIDE SEQUENCE [LARGE SCALE GENOMIC DNA]</scope>
    <scope>GENOME REANNOTATION</scope>
    <source>
        <strain>ATCC BAA-793 / NCIMB 8826 / WCFS1</strain>
    </source>
</reference>
<name>PHNX_LACPL</name>
<accession>Q88YN8</accession>
<accession>F9ULU6</accession>
<protein>
    <recommendedName>
        <fullName evidence="1">Phosphonoacetaldehyde hydrolase</fullName>
        <shortName evidence="1">Phosphonatase</shortName>
        <ecNumber evidence="1">3.11.1.1</ecNumber>
    </recommendedName>
    <alternativeName>
        <fullName evidence="1">Phosphonoacetaldehyde phosphonohydrolase</fullName>
    </alternativeName>
</protein>